<name>DSVC_NITV2</name>
<reference key="1">
    <citation type="journal article" date="1993" name="Eur. J. Biochem.">
        <title>Expression of the gamma-subunit gene of desulfoviridin-type dissimilatory sulfite reductase and of the alpha- and beta-subunit genes is not coordinately regulated.</title>
        <authorList>
            <person name="Karkhoff-Schweizer R.R."/>
            <person name="Bruschi M."/>
            <person name="Voordouw G."/>
        </authorList>
    </citation>
    <scope>NUCLEOTIDE SEQUENCE [GENOMIC DNA]</scope>
    <scope>PROTEIN SEQUENCE OF 2-25</scope>
</reference>
<reference key="2">
    <citation type="journal article" date="2004" name="Nat. Biotechnol.">
        <title>The genome sequence of the anaerobic, sulfate-reducing bacterium Desulfovibrio vulgaris Hildenborough.</title>
        <authorList>
            <person name="Heidelberg J.F."/>
            <person name="Seshadri R."/>
            <person name="Haveman S.A."/>
            <person name="Hemme C.L."/>
            <person name="Paulsen I.T."/>
            <person name="Kolonay J.F."/>
            <person name="Eisen J.A."/>
            <person name="Ward N.L."/>
            <person name="Methe B.A."/>
            <person name="Brinkac L.M."/>
            <person name="Daugherty S.C."/>
            <person name="DeBoy R.T."/>
            <person name="Dodson R.J."/>
            <person name="Durkin A.S."/>
            <person name="Madupu R."/>
            <person name="Nelson W.C."/>
            <person name="Sullivan S.A."/>
            <person name="Fouts D.E."/>
            <person name="Haft D.H."/>
            <person name="Selengut J."/>
            <person name="Peterson J.D."/>
            <person name="Davidsen T.M."/>
            <person name="Zafar N."/>
            <person name="Zhou L."/>
            <person name="Radune D."/>
            <person name="Dimitrov G."/>
            <person name="Hance M."/>
            <person name="Tran K."/>
            <person name="Khouri H.M."/>
            <person name="Gill J."/>
            <person name="Utterback T.R."/>
            <person name="Feldblyum T.V."/>
            <person name="Wall J.D."/>
            <person name="Voordouw G."/>
            <person name="Fraser C.M."/>
        </authorList>
    </citation>
    <scope>NUCLEOTIDE SEQUENCE [LARGE SCALE GENOMIC DNA]</scope>
    <source>
        <strain>ATCC 29579 / DSM 644 / CCUG 34227 / NCIMB 8303 / VKM B-1760 / Hildenborough</strain>
    </source>
</reference>
<reference key="3">
    <citation type="journal article" date="1992" name="Eur. J. Biochem.">
        <title>The third subunit of desulfoviridin-type dissimilatory sulfite reductases.</title>
        <authorList>
            <person name="Pierik A.J."/>
            <person name="Duyvis M.G."/>
            <person name="van Helvoort J.M.L.M."/>
            <person name="Wolbert R.B.G."/>
            <person name="Hagen W.R."/>
        </authorList>
    </citation>
    <scope>PROTEIN SEQUENCE OF 2-23</scope>
    <scope>FUNCTION</scope>
    <scope>CATALYTIC ACTIVITY</scope>
</reference>
<reference key="4">
    <citation type="journal article" date="2008" name="J. Biol. Chem.">
        <title>The crystal structure of Desulfovibrio vulgaris dissimilatory sulfite reductase bound to DsrC provides novel insights into the mechanism of sulfate respiration.</title>
        <authorList>
            <person name="Oliveira T.F."/>
            <person name="Vonrhein C."/>
            <person name="Matias P.M."/>
            <person name="Venceslau S.S."/>
            <person name="Pereira I.A.C."/>
            <person name="Archer M."/>
        </authorList>
    </citation>
    <scope>X-RAY CRYSTALLOGRAPHY (2.10 ANGSTROMS) IN COMPLEX WITH DSVA AND DSVB</scope>
    <scope>SUBUNIT</scope>
    <scope>REACTION MECHANISM</scope>
</reference>
<gene>
    <name type="primary">dsvC</name>
    <name type="ordered locus">DVU_2776</name>
</gene>
<accession>P45573</accession>
<protein>
    <recommendedName>
        <fullName>Sulfite reductase, dissimilatory-type subunit gamma</fullName>
        <ecNumber evidence="1">1.8.1.22</ecNumber>
    </recommendedName>
    <alternativeName>
        <fullName>Desulfoviridin subunit gamma</fullName>
    </alternativeName>
    <alternativeName>
        <fullName>Hydrogensulfite reductase subunit gamma</fullName>
    </alternativeName>
</protein>
<proteinExistence type="evidence at protein level"/>
<keyword id="KW-0002">3D-structure</keyword>
<keyword id="KW-0963">Cytoplasm</keyword>
<keyword id="KW-0903">Direct protein sequencing</keyword>
<keyword id="KW-0560">Oxidoreductase</keyword>
<keyword id="KW-1185">Reference proteome</keyword>
<dbReference type="EC" id="1.8.1.22" evidence="1"/>
<dbReference type="EMBL" id="L05610">
    <property type="protein sequence ID" value="AAA23366.1"/>
    <property type="molecule type" value="Genomic_DNA"/>
</dbReference>
<dbReference type="EMBL" id="AE017285">
    <property type="protein sequence ID" value="AAS97248.1"/>
    <property type="molecule type" value="Genomic_DNA"/>
</dbReference>
<dbReference type="PIR" id="S29376">
    <property type="entry name" value="S29376"/>
</dbReference>
<dbReference type="RefSeq" id="WP_010940042.1">
    <property type="nucleotide sequence ID" value="NC_002937.3"/>
</dbReference>
<dbReference type="RefSeq" id="YP_011988.1">
    <property type="nucleotide sequence ID" value="NC_002937.3"/>
</dbReference>
<dbReference type="PDB" id="2V4J">
    <property type="method" value="X-ray"/>
    <property type="resolution" value="2.10 A"/>
    <property type="chains" value="C/F=1-105"/>
</dbReference>
<dbReference type="PDBsum" id="2V4J"/>
<dbReference type="SMR" id="P45573"/>
<dbReference type="IntAct" id="P45573">
    <property type="interactions" value="4"/>
</dbReference>
<dbReference type="STRING" id="882.DVU_2776"/>
<dbReference type="PaxDb" id="882-DVU_2776"/>
<dbReference type="EnsemblBacteria" id="AAS97248">
    <property type="protein sequence ID" value="AAS97248"/>
    <property type="gene ID" value="DVU_2776"/>
</dbReference>
<dbReference type="KEGG" id="dvu:DVU_2776"/>
<dbReference type="PATRIC" id="fig|882.5.peg.2511"/>
<dbReference type="eggNOG" id="COG2920">
    <property type="taxonomic scope" value="Bacteria"/>
</dbReference>
<dbReference type="HOGENOM" id="CLU_153199_1_0_7"/>
<dbReference type="OrthoDB" id="9786347at2"/>
<dbReference type="PhylomeDB" id="P45573"/>
<dbReference type="BioCyc" id="MetaCyc:MONOMER-12513"/>
<dbReference type="EvolutionaryTrace" id="P45573"/>
<dbReference type="Proteomes" id="UP000002194">
    <property type="component" value="Chromosome"/>
</dbReference>
<dbReference type="GO" id="GO:0005737">
    <property type="term" value="C:cytoplasm"/>
    <property type="evidence" value="ECO:0007669"/>
    <property type="project" value="UniProtKB-SubCell"/>
</dbReference>
<dbReference type="GO" id="GO:0018551">
    <property type="term" value="F:dissimilatory sulfite reductase (NADH) activity"/>
    <property type="evidence" value="ECO:0007669"/>
    <property type="project" value="RHEA"/>
</dbReference>
<dbReference type="GO" id="GO:0097163">
    <property type="term" value="F:sulfur carrier activity"/>
    <property type="evidence" value="ECO:0007669"/>
    <property type="project" value="TreeGrafter"/>
</dbReference>
<dbReference type="GO" id="GO:0002143">
    <property type="term" value="P:tRNA wobble position uridine thiolation"/>
    <property type="evidence" value="ECO:0007669"/>
    <property type="project" value="TreeGrafter"/>
</dbReference>
<dbReference type="Gene3D" id="3.30.1420.10">
    <property type="match status" value="1"/>
</dbReference>
<dbReference type="Gene3D" id="1.10.10.370">
    <property type="entry name" value="DsrC-like protein, C-terminal domain"/>
    <property type="match status" value="1"/>
</dbReference>
<dbReference type="InterPro" id="IPR042072">
    <property type="entry name" value="DsrC-like_C"/>
</dbReference>
<dbReference type="InterPro" id="IPR025526">
    <property type="entry name" value="DsrC-like_dom_sf"/>
</dbReference>
<dbReference type="InterPro" id="IPR043163">
    <property type="entry name" value="DsrC-like_N"/>
</dbReference>
<dbReference type="InterPro" id="IPR007453">
    <property type="entry name" value="DsrC/TusE"/>
</dbReference>
<dbReference type="NCBIfam" id="TIGR03342">
    <property type="entry name" value="dsrC_tusE_dsvC"/>
    <property type="match status" value="1"/>
</dbReference>
<dbReference type="PANTHER" id="PTHR37010">
    <property type="entry name" value="SULFURTRANSFERASE TUSE"/>
    <property type="match status" value="1"/>
</dbReference>
<dbReference type="PANTHER" id="PTHR37010:SF1">
    <property type="entry name" value="SULFURTRANSFERASE TUSE"/>
    <property type="match status" value="1"/>
</dbReference>
<dbReference type="Pfam" id="PF04358">
    <property type="entry name" value="DsrC"/>
    <property type="match status" value="1"/>
</dbReference>
<dbReference type="PIRSF" id="PIRSF006223">
    <property type="entry name" value="DsrC_TusE"/>
    <property type="match status" value="1"/>
</dbReference>
<dbReference type="SUPFAM" id="SSF69721">
    <property type="entry name" value="DsrC, the gamma subunit of dissimilatory sulfite reductase"/>
    <property type="match status" value="1"/>
</dbReference>
<comment type="function">
    <text evidence="1">Catalyzes the reduction of sulfite to sulfide. This is the terminal oxidation reaction in sulfate respiration, a process catalyzed by the sulfate-reducing bacteria.</text>
</comment>
<comment type="catalytic activity">
    <reaction evidence="1">
        <text>[DsrC protein]-trisulfide + NAD(+) + 3 H2O = [DsrC protein]-dithiol + sulfite + NADH + 3 H(+)</text>
        <dbReference type="Rhea" id="RHEA:78943"/>
        <dbReference type="Rhea" id="RHEA-COMP:11723"/>
        <dbReference type="Rhea" id="RHEA-COMP:19152"/>
        <dbReference type="ChEBI" id="CHEBI:15377"/>
        <dbReference type="ChEBI" id="CHEBI:15378"/>
        <dbReference type="ChEBI" id="CHEBI:17359"/>
        <dbReference type="ChEBI" id="CHEBI:29950"/>
        <dbReference type="ChEBI" id="CHEBI:57540"/>
        <dbReference type="ChEBI" id="CHEBI:57945"/>
        <dbReference type="ChEBI" id="CHEBI:229579"/>
        <dbReference type="EC" id="1.8.1.22"/>
    </reaction>
</comment>
<comment type="subunit">
    <text evidence="2">Heterohexamer of two alpha, two beta and two gamma subunits.</text>
</comment>
<comment type="interaction">
    <interactant intactId="EBI-9017020">
        <id>P45573</id>
    </interactant>
    <interactant intactId="EBI-9016991">
        <id>P45574</id>
        <label>dsvA</label>
    </interactant>
    <organismsDiffer>false</organismsDiffer>
    <experiments>3</experiments>
</comment>
<comment type="interaction">
    <interactant intactId="EBI-9017020">
        <id>P45573</id>
    </interactant>
    <interactant intactId="EBI-10064808">
        <id>Q72CN2</id>
        <label>DVU_1251</label>
    </interactant>
    <organismsDiffer>false</organismsDiffer>
    <experiments>3</experiments>
</comment>
<comment type="subcellular location">
    <subcellularLocation>
        <location>Cytoplasm</location>
    </subcellularLocation>
</comment>
<comment type="similarity">
    <text evidence="4">Belongs to the DsrC/TusE family.</text>
</comment>
<organism>
    <name type="scientific">Nitratidesulfovibrio vulgaris (strain ATCC 29579 / DSM 644 / CCUG 34227 / NCIMB 8303 / VKM B-1760 / Hildenborough)</name>
    <name type="common">Desulfovibrio vulgaris</name>
    <dbReference type="NCBI Taxonomy" id="882"/>
    <lineage>
        <taxon>Bacteria</taxon>
        <taxon>Pseudomonadati</taxon>
        <taxon>Thermodesulfobacteriota</taxon>
        <taxon>Desulfovibrionia</taxon>
        <taxon>Desulfovibrionales</taxon>
        <taxon>Desulfovibrionaceae</taxon>
        <taxon>Nitratidesulfovibrio</taxon>
    </lineage>
</organism>
<feature type="initiator methionine" description="Removed" evidence="1 3">
    <location>
        <position position="1"/>
    </location>
</feature>
<feature type="chain" id="PRO_0000080033" description="Sulfite reductase, dissimilatory-type subunit gamma">
    <location>
        <begin position="2"/>
        <end position="105"/>
    </location>
</feature>
<feature type="sequence conflict" description="In Ref. 3; AA sequence." evidence="4" ref="3">
    <original>E</original>
    <variation>D</variation>
    <location>
        <position position="15"/>
    </location>
</feature>
<feature type="sequence conflict" description="In Ref. 3; AA sequence." evidence="4" ref="3">
    <original>L</original>
    <variation>LI</variation>
    <location>
        <position position="20"/>
    </location>
</feature>
<feature type="strand" evidence="5">
    <location>
        <begin position="4"/>
        <end position="6"/>
    </location>
</feature>
<feature type="strand" evidence="5">
    <location>
        <begin position="9"/>
        <end position="11"/>
    </location>
</feature>
<feature type="helix" evidence="5">
    <location>
        <begin position="22"/>
        <end position="24"/>
    </location>
</feature>
<feature type="helix" evidence="5">
    <location>
        <begin position="27"/>
        <end position="33"/>
    </location>
</feature>
<feature type="helix" evidence="5">
    <location>
        <begin position="34"/>
        <end position="37"/>
    </location>
</feature>
<feature type="helix" evidence="5">
    <location>
        <begin position="44"/>
        <end position="60"/>
    </location>
</feature>
<feature type="helix" evidence="5">
    <location>
        <begin position="66"/>
        <end position="73"/>
    </location>
</feature>
<feature type="helix" evidence="5">
    <location>
        <begin position="77"/>
        <end position="83"/>
    </location>
</feature>
<feature type="helix" evidence="5">
    <location>
        <begin position="87"/>
        <end position="90"/>
    </location>
</feature>
<feature type="helix" evidence="5">
    <location>
        <begin position="92"/>
        <end position="96"/>
    </location>
</feature>
<evidence type="ECO:0000269" key="1">
    <source>
    </source>
</evidence>
<evidence type="ECO:0000269" key="2">
    <source>
    </source>
</evidence>
<evidence type="ECO:0000269" key="3">
    <source>
    </source>
</evidence>
<evidence type="ECO:0000305" key="4"/>
<evidence type="ECO:0007829" key="5">
    <source>
        <dbReference type="PDB" id="2V4J"/>
    </source>
</evidence>
<sequence>MAEVTYKGKSFEVDEDGFLLRFDDWCPEWVEYVKESEGISDISPDHQKIIDFLQDYYKKNGIAPMVRILSKNTGFKLKEVYELFPSGPGKGACKMAGLPKPTGCV</sequence>